<comment type="function">
    <text evidence="1">Hydrolyzes ribosome-free peptidyl-tRNAs (with 1 or more amino acids incorporated), which drop off the ribosome during protein synthesis, or as a result of ribosome stalling.</text>
</comment>
<comment type="function">
    <text evidence="1">Catalyzes the release of premature peptidyl moieties from peptidyl-tRNA molecules trapped in stalled 50S ribosomal subunits, and thus maintains levels of free tRNAs and 50S ribosomes.</text>
</comment>
<comment type="catalytic activity">
    <reaction evidence="1">
        <text>an N-acyl-L-alpha-aminoacyl-tRNA + H2O = an N-acyl-L-amino acid + a tRNA + H(+)</text>
        <dbReference type="Rhea" id="RHEA:54448"/>
        <dbReference type="Rhea" id="RHEA-COMP:10123"/>
        <dbReference type="Rhea" id="RHEA-COMP:13883"/>
        <dbReference type="ChEBI" id="CHEBI:15377"/>
        <dbReference type="ChEBI" id="CHEBI:15378"/>
        <dbReference type="ChEBI" id="CHEBI:59874"/>
        <dbReference type="ChEBI" id="CHEBI:78442"/>
        <dbReference type="ChEBI" id="CHEBI:138191"/>
        <dbReference type="EC" id="3.1.1.29"/>
    </reaction>
</comment>
<comment type="subunit">
    <text evidence="1">Monomer.</text>
</comment>
<comment type="subcellular location">
    <subcellularLocation>
        <location evidence="1">Cytoplasm</location>
    </subcellularLocation>
</comment>
<comment type="similarity">
    <text evidence="1">Belongs to the PTH family.</text>
</comment>
<feature type="chain" id="PRO_1000010587" description="Peptidyl-tRNA hydrolase">
    <location>
        <begin position="1"/>
        <end position="201"/>
    </location>
</feature>
<feature type="active site" description="Proton acceptor" evidence="1">
    <location>
        <position position="22"/>
    </location>
</feature>
<feature type="binding site" evidence="1">
    <location>
        <position position="17"/>
    </location>
    <ligand>
        <name>tRNA</name>
        <dbReference type="ChEBI" id="CHEBI:17843"/>
    </ligand>
</feature>
<feature type="binding site" evidence="1">
    <location>
        <position position="76"/>
    </location>
    <ligand>
        <name>tRNA</name>
        <dbReference type="ChEBI" id="CHEBI:17843"/>
    </ligand>
</feature>
<feature type="binding site" evidence="1">
    <location>
        <position position="78"/>
    </location>
    <ligand>
        <name>tRNA</name>
        <dbReference type="ChEBI" id="CHEBI:17843"/>
    </ligand>
</feature>
<feature type="binding site" evidence="1">
    <location>
        <position position="124"/>
    </location>
    <ligand>
        <name>tRNA</name>
        <dbReference type="ChEBI" id="CHEBI:17843"/>
    </ligand>
</feature>
<feature type="site" description="Discriminates between blocked and unblocked aminoacyl-tRNA" evidence="1">
    <location>
        <position position="12"/>
    </location>
</feature>
<feature type="site" description="Stabilizes the basic form of H active site to accept a proton" evidence="1">
    <location>
        <position position="103"/>
    </location>
</feature>
<dbReference type="EC" id="3.1.1.29" evidence="1"/>
<dbReference type="EMBL" id="CP000527">
    <property type="protein sequence ID" value="ABM28577.1"/>
    <property type="molecule type" value="Genomic_DNA"/>
</dbReference>
<dbReference type="RefSeq" id="WP_010938864.1">
    <property type="nucleotide sequence ID" value="NC_008751.1"/>
</dbReference>
<dbReference type="SMR" id="A1VDR1"/>
<dbReference type="KEGG" id="dvl:Dvul_1560"/>
<dbReference type="HOGENOM" id="CLU_062456_3_1_7"/>
<dbReference type="Proteomes" id="UP000009173">
    <property type="component" value="Chromosome"/>
</dbReference>
<dbReference type="GO" id="GO:0005737">
    <property type="term" value="C:cytoplasm"/>
    <property type="evidence" value="ECO:0007669"/>
    <property type="project" value="UniProtKB-SubCell"/>
</dbReference>
<dbReference type="GO" id="GO:0004045">
    <property type="term" value="F:peptidyl-tRNA hydrolase activity"/>
    <property type="evidence" value="ECO:0007669"/>
    <property type="project" value="UniProtKB-UniRule"/>
</dbReference>
<dbReference type="GO" id="GO:0000049">
    <property type="term" value="F:tRNA binding"/>
    <property type="evidence" value="ECO:0007669"/>
    <property type="project" value="UniProtKB-UniRule"/>
</dbReference>
<dbReference type="GO" id="GO:0006515">
    <property type="term" value="P:protein quality control for misfolded or incompletely synthesized proteins"/>
    <property type="evidence" value="ECO:0007669"/>
    <property type="project" value="UniProtKB-UniRule"/>
</dbReference>
<dbReference type="GO" id="GO:0072344">
    <property type="term" value="P:rescue of stalled ribosome"/>
    <property type="evidence" value="ECO:0007669"/>
    <property type="project" value="UniProtKB-UniRule"/>
</dbReference>
<dbReference type="CDD" id="cd00462">
    <property type="entry name" value="PTH"/>
    <property type="match status" value="1"/>
</dbReference>
<dbReference type="FunFam" id="3.40.50.1470:FF:000001">
    <property type="entry name" value="Peptidyl-tRNA hydrolase"/>
    <property type="match status" value="1"/>
</dbReference>
<dbReference type="Gene3D" id="3.40.50.1470">
    <property type="entry name" value="Peptidyl-tRNA hydrolase"/>
    <property type="match status" value="1"/>
</dbReference>
<dbReference type="HAMAP" id="MF_00083">
    <property type="entry name" value="Pept_tRNA_hydro_bact"/>
    <property type="match status" value="1"/>
</dbReference>
<dbReference type="InterPro" id="IPR001328">
    <property type="entry name" value="Pept_tRNA_hydro"/>
</dbReference>
<dbReference type="InterPro" id="IPR018171">
    <property type="entry name" value="Pept_tRNA_hydro_CS"/>
</dbReference>
<dbReference type="InterPro" id="IPR036416">
    <property type="entry name" value="Pept_tRNA_hydro_sf"/>
</dbReference>
<dbReference type="NCBIfam" id="TIGR00447">
    <property type="entry name" value="pth"/>
    <property type="match status" value="1"/>
</dbReference>
<dbReference type="PANTHER" id="PTHR17224">
    <property type="entry name" value="PEPTIDYL-TRNA HYDROLASE"/>
    <property type="match status" value="1"/>
</dbReference>
<dbReference type="PANTHER" id="PTHR17224:SF1">
    <property type="entry name" value="PEPTIDYL-TRNA HYDROLASE"/>
    <property type="match status" value="1"/>
</dbReference>
<dbReference type="Pfam" id="PF01195">
    <property type="entry name" value="Pept_tRNA_hydro"/>
    <property type="match status" value="1"/>
</dbReference>
<dbReference type="SUPFAM" id="SSF53178">
    <property type="entry name" value="Peptidyl-tRNA hydrolase-like"/>
    <property type="match status" value="1"/>
</dbReference>
<dbReference type="PROSITE" id="PS01195">
    <property type="entry name" value="PEPT_TRNA_HYDROL_1"/>
    <property type="match status" value="1"/>
</dbReference>
<dbReference type="PROSITE" id="PS01196">
    <property type="entry name" value="PEPT_TRNA_HYDROL_2"/>
    <property type="match status" value="1"/>
</dbReference>
<reference key="1">
    <citation type="journal article" date="2009" name="Environ. Microbiol.">
        <title>Contribution of mobile genetic elements to Desulfovibrio vulgaris genome plasticity.</title>
        <authorList>
            <person name="Walker C.B."/>
            <person name="Stolyar S."/>
            <person name="Chivian D."/>
            <person name="Pinel N."/>
            <person name="Gabster J.A."/>
            <person name="Dehal P.S."/>
            <person name="He Z."/>
            <person name="Yang Z.K."/>
            <person name="Yen H.C."/>
            <person name="Zhou J."/>
            <person name="Wall J.D."/>
            <person name="Hazen T.C."/>
            <person name="Arkin A.P."/>
            <person name="Stahl D.A."/>
        </authorList>
    </citation>
    <scope>NUCLEOTIDE SEQUENCE [LARGE SCALE GENOMIC DNA]</scope>
    <source>
        <strain>DP4</strain>
    </source>
</reference>
<sequence>MNISGLIIGLGNPGREYDRTRHNFGFMFIDALLEEAQRNPFARCEQLSGGKKKYDLWRCDIVEGQAPWLLAKPQTFMNLSGEAVLAIASFYRVKPAAMVVAHDELDLPLGRMRFKMGGGNAGHNGLKSITQCLGTPDFHRLRLGIGKPPAGGETTGWVLGRFSQSDTAMVDAVLEAAIQGIRTFATEGDVAATQYINAFRP</sequence>
<proteinExistence type="inferred from homology"/>
<gene>
    <name evidence="1" type="primary">pth</name>
    <name type="ordered locus">Dvul_1560</name>
</gene>
<protein>
    <recommendedName>
        <fullName evidence="1">Peptidyl-tRNA hydrolase</fullName>
        <shortName evidence="1">Pth</shortName>
        <ecNumber evidence="1">3.1.1.29</ecNumber>
    </recommendedName>
</protein>
<keyword id="KW-0963">Cytoplasm</keyword>
<keyword id="KW-0378">Hydrolase</keyword>
<keyword id="KW-0694">RNA-binding</keyword>
<keyword id="KW-0820">tRNA-binding</keyword>
<organism>
    <name type="scientific">Nitratidesulfovibrio vulgaris (strain DP4)</name>
    <name type="common">Desulfovibrio vulgaris</name>
    <dbReference type="NCBI Taxonomy" id="391774"/>
    <lineage>
        <taxon>Bacteria</taxon>
        <taxon>Pseudomonadati</taxon>
        <taxon>Thermodesulfobacteriota</taxon>
        <taxon>Desulfovibrionia</taxon>
        <taxon>Desulfovibrionales</taxon>
        <taxon>Desulfovibrionaceae</taxon>
        <taxon>Nitratidesulfovibrio</taxon>
    </lineage>
</organism>
<name>PTH_NITV4</name>
<evidence type="ECO:0000255" key="1">
    <source>
        <dbReference type="HAMAP-Rule" id="MF_00083"/>
    </source>
</evidence>
<accession>A1VDR1</accession>